<gene>
    <name evidence="1" type="primary">argG</name>
    <name type="ordered locus">P9211_18441</name>
</gene>
<comment type="catalytic activity">
    <reaction evidence="1">
        <text>L-citrulline + L-aspartate + ATP = 2-(N(omega)-L-arginino)succinate + AMP + diphosphate + H(+)</text>
        <dbReference type="Rhea" id="RHEA:10932"/>
        <dbReference type="ChEBI" id="CHEBI:15378"/>
        <dbReference type="ChEBI" id="CHEBI:29991"/>
        <dbReference type="ChEBI" id="CHEBI:30616"/>
        <dbReference type="ChEBI" id="CHEBI:33019"/>
        <dbReference type="ChEBI" id="CHEBI:57472"/>
        <dbReference type="ChEBI" id="CHEBI:57743"/>
        <dbReference type="ChEBI" id="CHEBI:456215"/>
        <dbReference type="EC" id="6.3.4.5"/>
    </reaction>
</comment>
<comment type="pathway">
    <text evidence="1">Amino-acid biosynthesis; L-arginine biosynthesis; L-arginine from L-ornithine and carbamoyl phosphate: step 2/3.</text>
</comment>
<comment type="subunit">
    <text evidence="1">Homotetramer.</text>
</comment>
<comment type="subcellular location">
    <subcellularLocation>
        <location evidence="1">Cytoplasm</location>
    </subcellularLocation>
</comment>
<comment type="similarity">
    <text evidence="1">Belongs to the argininosuccinate synthase family. Type 1 subfamily.</text>
</comment>
<sequence>MEVKKVVLAYSGGVDTSSCIPYLINEYGVEEVVAFAADLGQGDELEPIREKALSAGASECLVDDLVKPFIEDFAFPAIRANALYEGKYPLSTALARPLISKRLVDIAKELEADAVAHGCTGKGNDQVRFDIAIATLAPELKVLTPARQWGMSREEVIAYGERYGIPAPVSKKSPYSIDLNLLGRSVEAGPLEDISLSPPEEVYQITSSIENTPDQSQEIEIIFEGGNPIAIDGVELDPLSLIVLANQLAGKHGFGRIDMIENRVVGIKSREIYETPGLLLLIKAHQELESLTLPADVLRTKSTLETQWADLVYQGLWFSPLKNALDGFIDRTQDEVNGSVKVKLHKGNATITGRSSSQNSLYLPDFSTYGSQDKFKHDNAEGFIYIWGLPSRLWAQSKNK</sequence>
<reference key="1">
    <citation type="journal article" date="2007" name="PLoS Genet.">
        <title>Patterns and implications of gene gain and loss in the evolution of Prochlorococcus.</title>
        <authorList>
            <person name="Kettler G.C."/>
            <person name="Martiny A.C."/>
            <person name="Huang K."/>
            <person name="Zucker J."/>
            <person name="Coleman M.L."/>
            <person name="Rodrigue S."/>
            <person name="Chen F."/>
            <person name="Lapidus A."/>
            <person name="Ferriera S."/>
            <person name="Johnson J."/>
            <person name="Steglich C."/>
            <person name="Church G.M."/>
            <person name="Richardson P."/>
            <person name="Chisholm S.W."/>
        </authorList>
    </citation>
    <scope>NUCLEOTIDE SEQUENCE [LARGE SCALE GENOMIC DNA]</scope>
    <source>
        <strain>MIT 9211</strain>
    </source>
</reference>
<protein>
    <recommendedName>
        <fullName evidence="1">Argininosuccinate synthase</fullName>
        <ecNumber evidence="1">6.3.4.5</ecNumber>
    </recommendedName>
    <alternativeName>
        <fullName evidence="1">Citrulline--aspartate ligase</fullName>
    </alternativeName>
</protein>
<name>ASSY_PROM4</name>
<organism>
    <name type="scientific">Prochlorococcus marinus (strain MIT 9211)</name>
    <dbReference type="NCBI Taxonomy" id="93059"/>
    <lineage>
        <taxon>Bacteria</taxon>
        <taxon>Bacillati</taxon>
        <taxon>Cyanobacteriota</taxon>
        <taxon>Cyanophyceae</taxon>
        <taxon>Synechococcales</taxon>
        <taxon>Prochlorococcaceae</taxon>
        <taxon>Prochlorococcus</taxon>
    </lineage>
</organism>
<feature type="chain" id="PRO_1000089050" description="Argininosuccinate synthase">
    <location>
        <begin position="1"/>
        <end position="400"/>
    </location>
</feature>
<feature type="binding site" evidence="1">
    <location>
        <begin position="9"/>
        <end position="17"/>
    </location>
    <ligand>
        <name>ATP</name>
        <dbReference type="ChEBI" id="CHEBI:30616"/>
    </ligand>
</feature>
<feature type="binding site" evidence="1">
    <location>
        <position position="37"/>
    </location>
    <ligand>
        <name>ATP</name>
        <dbReference type="ChEBI" id="CHEBI:30616"/>
    </ligand>
</feature>
<feature type="binding site" evidence="1">
    <location>
        <position position="88"/>
    </location>
    <ligand>
        <name>L-citrulline</name>
        <dbReference type="ChEBI" id="CHEBI:57743"/>
    </ligand>
</feature>
<feature type="binding site" evidence="1">
    <location>
        <position position="118"/>
    </location>
    <ligand>
        <name>ATP</name>
        <dbReference type="ChEBI" id="CHEBI:30616"/>
    </ligand>
</feature>
<feature type="binding site" evidence="1">
    <location>
        <position position="120"/>
    </location>
    <ligand>
        <name>L-aspartate</name>
        <dbReference type="ChEBI" id="CHEBI:29991"/>
    </ligand>
</feature>
<feature type="binding site" evidence="1">
    <location>
        <position position="124"/>
    </location>
    <ligand>
        <name>L-aspartate</name>
        <dbReference type="ChEBI" id="CHEBI:29991"/>
    </ligand>
</feature>
<feature type="binding site" evidence="1">
    <location>
        <position position="124"/>
    </location>
    <ligand>
        <name>L-citrulline</name>
        <dbReference type="ChEBI" id="CHEBI:57743"/>
    </ligand>
</feature>
<feature type="binding site" evidence="1">
    <location>
        <position position="125"/>
    </location>
    <ligand>
        <name>L-aspartate</name>
        <dbReference type="ChEBI" id="CHEBI:29991"/>
    </ligand>
</feature>
<feature type="binding site" evidence="1">
    <location>
        <position position="128"/>
    </location>
    <ligand>
        <name>L-citrulline</name>
        <dbReference type="ChEBI" id="CHEBI:57743"/>
    </ligand>
</feature>
<feature type="binding site" evidence="1">
    <location>
        <position position="176"/>
    </location>
    <ligand>
        <name>L-citrulline</name>
        <dbReference type="ChEBI" id="CHEBI:57743"/>
    </ligand>
</feature>
<feature type="binding site" evidence="1">
    <location>
        <position position="185"/>
    </location>
    <ligand>
        <name>L-citrulline</name>
        <dbReference type="ChEBI" id="CHEBI:57743"/>
    </ligand>
</feature>
<feature type="binding site" evidence="1">
    <location>
        <position position="261"/>
    </location>
    <ligand>
        <name>L-citrulline</name>
        <dbReference type="ChEBI" id="CHEBI:57743"/>
    </ligand>
</feature>
<feature type="binding site" evidence="1">
    <location>
        <position position="273"/>
    </location>
    <ligand>
        <name>L-citrulline</name>
        <dbReference type="ChEBI" id="CHEBI:57743"/>
    </ligand>
</feature>
<accession>A9BDR3</accession>
<proteinExistence type="inferred from homology"/>
<dbReference type="EC" id="6.3.4.5" evidence="1"/>
<dbReference type="EMBL" id="CP000878">
    <property type="protein sequence ID" value="ABX09775.1"/>
    <property type="molecule type" value="Genomic_DNA"/>
</dbReference>
<dbReference type="RefSeq" id="WP_012196395.1">
    <property type="nucleotide sequence ID" value="NC_009976.1"/>
</dbReference>
<dbReference type="SMR" id="A9BDR3"/>
<dbReference type="STRING" id="93059.P9211_18441"/>
<dbReference type="KEGG" id="pmj:P9211_18441"/>
<dbReference type="eggNOG" id="COG0137">
    <property type="taxonomic scope" value="Bacteria"/>
</dbReference>
<dbReference type="HOGENOM" id="CLU_032784_4_2_3"/>
<dbReference type="OrthoDB" id="9801641at2"/>
<dbReference type="UniPathway" id="UPA00068">
    <property type="reaction ID" value="UER00113"/>
</dbReference>
<dbReference type="Proteomes" id="UP000000788">
    <property type="component" value="Chromosome"/>
</dbReference>
<dbReference type="GO" id="GO:0005737">
    <property type="term" value="C:cytoplasm"/>
    <property type="evidence" value="ECO:0007669"/>
    <property type="project" value="UniProtKB-SubCell"/>
</dbReference>
<dbReference type="GO" id="GO:0004055">
    <property type="term" value="F:argininosuccinate synthase activity"/>
    <property type="evidence" value="ECO:0007669"/>
    <property type="project" value="UniProtKB-UniRule"/>
</dbReference>
<dbReference type="GO" id="GO:0005524">
    <property type="term" value="F:ATP binding"/>
    <property type="evidence" value="ECO:0007669"/>
    <property type="project" value="UniProtKB-UniRule"/>
</dbReference>
<dbReference type="GO" id="GO:0000053">
    <property type="term" value="P:argininosuccinate metabolic process"/>
    <property type="evidence" value="ECO:0007669"/>
    <property type="project" value="TreeGrafter"/>
</dbReference>
<dbReference type="GO" id="GO:0006526">
    <property type="term" value="P:L-arginine biosynthetic process"/>
    <property type="evidence" value="ECO:0007669"/>
    <property type="project" value="UniProtKB-UniRule"/>
</dbReference>
<dbReference type="GO" id="GO:0000050">
    <property type="term" value="P:urea cycle"/>
    <property type="evidence" value="ECO:0007669"/>
    <property type="project" value="TreeGrafter"/>
</dbReference>
<dbReference type="CDD" id="cd01999">
    <property type="entry name" value="ASS"/>
    <property type="match status" value="1"/>
</dbReference>
<dbReference type="FunFam" id="3.40.50.620:FF:000019">
    <property type="entry name" value="Argininosuccinate synthase"/>
    <property type="match status" value="1"/>
</dbReference>
<dbReference type="FunFam" id="3.90.1260.10:FF:000007">
    <property type="entry name" value="Argininosuccinate synthase"/>
    <property type="match status" value="1"/>
</dbReference>
<dbReference type="Gene3D" id="3.90.1260.10">
    <property type="entry name" value="Argininosuccinate synthetase, chain A, domain 2"/>
    <property type="match status" value="1"/>
</dbReference>
<dbReference type="Gene3D" id="3.40.50.620">
    <property type="entry name" value="HUPs"/>
    <property type="match status" value="1"/>
</dbReference>
<dbReference type="Gene3D" id="1.20.5.470">
    <property type="entry name" value="Single helix bin"/>
    <property type="match status" value="1"/>
</dbReference>
<dbReference type="HAMAP" id="MF_00005">
    <property type="entry name" value="Arg_succ_synth_type1"/>
    <property type="match status" value="1"/>
</dbReference>
<dbReference type="InterPro" id="IPR048268">
    <property type="entry name" value="Arginosuc_syn_C"/>
</dbReference>
<dbReference type="InterPro" id="IPR048267">
    <property type="entry name" value="Arginosuc_syn_N"/>
</dbReference>
<dbReference type="InterPro" id="IPR001518">
    <property type="entry name" value="Arginosuc_synth"/>
</dbReference>
<dbReference type="InterPro" id="IPR018223">
    <property type="entry name" value="Arginosuc_synth_CS"/>
</dbReference>
<dbReference type="InterPro" id="IPR023434">
    <property type="entry name" value="Arginosuc_synth_type_1_subfam"/>
</dbReference>
<dbReference type="InterPro" id="IPR024074">
    <property type="entry name" value="AS_cat/multimer_dom_body"/>
</dbReference>
<dbReference type="InterPro" id="IPR014729">
    <property type="entry name" value="Rossmann-like_a/b/a_fold"/>
</dbReference>
<dbReference type="NCBIfam" id="TIGR00032">
    <property type="entry name" value="argG"/>
    <property type="match status" value="1"/>
</dbReference>
<dbReference type="NCBIfam" id="NF001770">
    <property type="entry name" value="PRK00509.1"/>
    <property type="match status" value="1"/>
</dbReference>
<dbReference type="PANTHER" id="PTHR11587">
    <property type="entry name" value="ARGININOSUCCINATE SYNTHASE"/>
    <property type="match status" value="1"/>
</dbReference>
<dbReference type="PANTHER" id="PTHR11587:SF2">
    <property type="entry name" value="ARGININOSUCCINATE SYNTHASE"/>
    <property type="match status" value="1"/>
</dbReference>
<dbReference type="Pfam" id="PF20979">
    <property type="entry name" value="Arginosuc_syn_C"/>
    <property type="match status" value="1"/>
</dbReference>
<dbReference type="Pfam" id="PF00764">
    <property type="entry name" value="Arginosuc_synth"/>
    <property type="match status" value="1"/>
</dbReference>
<dbReference type="SUPFAM" id="SSF52402">
    <property type="entry name" value="Adenine nucleotide alpha hydrolases-like"/>
    <property type="match status" value="1"/>
</dbReference>
<dbReference type="SUPFAM" id="SSF69864">
    <property type="entry name" value="Argininosuccinate synthetase, C-terminal domain"/>
    <property type="match status" value="1"/>
</dbReference>
<dbReference type="PROSITE" id="PS00564">
    <property type="entry name" value="ARGININOSUCCIN_SYN_1"/>
    <property type="match status" value="1"/>
</dbReference>
<dbReference type="PROSITE" id="PS00565">
    <property type="entry name" value="ARGININOSUCCIN_SYN_2"/>
    <property type="match status" value="1"/>
</dbReference>
<evidence type="ECO:0000255" key="1">
    <source>
        <dbReference type="HAMAP-Rule" id="MF_00005"/>
    </source>
</evidence>
<keyword id="KW-0028">Amino-acid biosynthesis</keyword>
<keyword id="KW-0055">Arginine biosynthesis</keyword>
<keyword id="KW-0067">ATP-binding</keyword>
<keyword id="KW-0963">Cytoplasm</keyword>
<keyword id="KW-0436">Ligase</keyword>
<keyword id="KW-0547">Nucleotide-binding</keyword>
<keyword id="KW-1185">Reference proteome</keyword>